<sequence>MLIEIPNVFSKQEVNQLREQLDARTWIDGNQTSGMMASTRKRNQQLDKDDPVALQIGELIMARLLAHPLFVSAALPLQFYPPLFNRYQGGDTFGYHIDNAIRSTSDGMVRTDLSATLFLSELNAYEGGELVIQDTYGQQSIKLAAGSLVLYPSTSLHQVTPVTSGERTSAFMWLQSMVRDEGQRRLLFQLDQSIQTLTAQQAAEQELFNLTGVYHNLLRRWSEL</sequence>
<keyword id="KW-0223">Dioxygenase</keyword>
<keyword id="KW-0408">Iron</keyword>
<keyword id="KW-0479">Metal-binding</keyword>
<keyword id="KW-0560">Oxidoreductase</keyword>
<keyword id="KW-1185">Reference proteome</keyword>
<keyword id="KW-0847">Vitamin C</keyword>
<proteinExistence type="inferred from homology"/>
<comment type="cofactor">
    <cofactor evidence="1">
        <name>Fe(2+)</name>
        <dbReference type="ChEBI" id="CHEBI:29033"/>
    </cofactor>
    <text evidence="1">Binds 1 Fe(2+) ion per subunit.</text>
</comment>
<comment type="cofactor">
    <cofactor evidence="1">
        <name>L-ascorbate</name>
        <dbReference type="ChEBI" id="CHEBI:38290"/>
    </cofactor>
</comment>
<reference key="1">
    <citation type="journal article" date="2002" name="Nat. Biotechnol.">
        <title>Genome sequence of the dissimilatory metal ion-reducing bacterium Shewanella oneidensis.</title>
        <authorList>
            <person name="Heidelberg J.F."/>
            <person name="Paulsen I.T."/>
            <person name="Nelson K.E."/>
            <person name="Gaidos E.J."/>
            <person name="Nelson W.C."/>
            <person name="Read T.D."/>
            <person name="Eisen J.A."/>
            <person name="Seshadri R."/>
            <person name="Ward N.L."/>
            <person name="Methe B.A."/>
            <person name="Clayton R.A."/>
            <person name="Meyer T."/>
            <person name="Tsapin A."/>
            <person name="Scott J."/>
            <person name="Beanan M.J."/>
            <person name="Brinkac L.M."/>
            <person name="Daugherty S.C."/>
            <person name="DeBoy R.T."/>
            <person name="Dodson R.J."/>
            <person name="Durkin A.S."/>
            <person name="Haft D.H."/>
            <person name="Kolonay J.F."/>
            <person name="Madupu R."/>
            <person name="Peterson J.D."/>
            <person name="Umayam L.A."/>
            <person name="White O."/>
            <person name="Wolf A.M."/>
            <person name="Vamathevan J.J."/>
            <person name="Weidman J.F."/>
            <person name="Impraim M."/>
            <person name="Lee K."/>
            <person name="Berry K.J."/>
            <person name="Lee C."/>
            <person name="Mueller J."/>
            <person name="Khouri H.M."/>
            <person name="Gill J."/>
            <person name="Utterback T.R."/>
            <person name="McDonald L.A."/>
            <person name="Feldblyum T.V."/>
            <person name="Smith H.O."/>
            <person name="Venter J.C."/>
            <person name="Nealson K.H."/>
            <person name="Fraser C.M."/>
        </authorList>
    </citation>
    <scope>NUCLEOTIDE SEQUENCE [LARGE SCALE GENOMIC DNA]</scope>
    <source>
        <strain>ATCC 700550 / JCM 31522 / CIP 106686 / LMG 19005 / NCIMB 14063 / MR-1</strain>
    </source>
</reference>
<protein>
    <recommendedName>
        <fullName evidence="1">PKHD-type hydroxylase SO_3913</fullName>
        <ecNumber evidence="1">1.14.11.-</ecNumber>
    </recommendedName>
</protein>
<evidence type="ECO:0000255" key="1">
    <source>
        <dbReference type="HAMAP-Rule" id="MF_00657"/>
    </source>
</evidence>
<organism>
    <name type="scientific">Shewanella oneidensis (strain ATCC 700550 / JCM 31522 / CIP 106686 / LMG 19005 / NCIMB 14063 / MR-1)</name>
    <dbReference type="NCBI Taxonomy" id="211586"/>
    <lineage>
        <taxon>Bacteria</taxon>
        <taxon>Pseudomonadati</taxon>
        <taxon>Pseudomonadota</taxon>
        <taxon>Gammaproteobacteria</taxon>
        <taxon>Alteromonadales</taxon>
        <taxon>Shewanellaceae</taxon>
        <taxon>Shewanella</taxon>
    </lineage>
</organism>
<gene>
    <name type="ordered locus">SO_3913</name>
</gene>
<feature type="chain" id="PRO_0000206682" description="PKHD-type hydroxylase SO_3913">
    <location>
        <begin position="1"/>
        <end position="224"/>
    </location>
</feature>
<feature type="domain" description="Fe2OG dioxygenase" evidence="1">
    <location>
        <begin position="78"/>
        <end position="176"/>
    </location>
</feature>
<feature type="binding site" evidence="1">
    <location>
        <position position="96"/>
    </location>
    <ligand>
        <name>Fe cation</name>
        <dbReference type="ChEBI" id="CHEBI:24875"/>
    </ligand>
</feature>
<feature type="binding site" evidence="1">
    <location>
        <position position="98"/>
    </location>
    <ligand>
        <name>Fe cation</name>
        <dbReference type="ChEBI" id="CHEBI:24875"/>
    </ligand>
</feature>
<feature type="binding site" evidence="1">
    <location>
        <position position="157"/>
    </location>
    <ligand>
        <name>Fe cation</name>
        <dbReference type="ChEBI" id="CHEBI:24875"/>
    </ligand>
</feature>
<feature type="binding site" evidence="1">
    <location>
        <position position="167"/>
    </location>
    <ligand>
        <name>2-oxoglutarate</name>
        <dbReference type="ChEBI" id="CHEBI:16810"/>
    </ligand>
</feature>
<accession>Q8EAI9</accession>
<dbReference type="EC" id="1.14.11.-" evidence="1"/>
<dbReference type="EMBL" id="AE014299">
    <property type="protein sequence ID" value="AAN56888.1"/>
    <property type="molecule type" value="Genomic_DNA"/>
</dbReference>
<dbReference type="RefSeq" id="NP_719444.1">
    <property type="nucleotide sequence ID" value="NC_004347.2"/>
</dbReference>
<dbReference type="RefSeq" id="WP_011073659.1">
    <property type="nucleotide sequence ID" value="NC_004347.2"/>
</dbReference>
<dbReference type="SMR" id="Q8EAI9"/>
<dbReference type="STRING" id="211586.SO_3913"/>
<dbReference type="PaxDb" id="211586-SO_3913"/>
<dbReference type="DNASU" id="1171553"/>
<dbReference type="KEGG" id="son:SO_3913"/>
<dbReference type="PATRIC" id="fig|211586.12.peg.3797"/>
<dbReference type="eggNOG" id="COG3128">
    <property type="taxonomic scope" value="Bacteria"/>
</dbReference>
<dbReference type="HOGENOM" id="CLU_106663_0_0_6"/>
<dbReference type="OrthoDB" id="9812472at2"/>
<dbReference type="PhylomeDB" id="Q8EAI9"/>
<dbReference type="BioCyc" id="SONE211586:G1GMP-3632-MONOMER"/>
<dbReference type="Proteomes" id="UP000008186">
    <property type="component" value="Chromosome"/>
</dbReference>
<dbReference type="GO" id="GO:0016706">
    <property type="term" value="F:2-oxoglutarate-dependent dioxygenase activity"/>
    <property type="evidence" value="ECO:0007669"/>
    <property type="project" value="UniProtKB-UniRule"/>
</dbReference>
<dbReference type="GO" id="GO:0005506">
    <property type="term" value="F:iron ion binding"/>
    <property type="evidence" value="ECO:0007669"/>
    <property type="project" value="UniProtKB-UniRule"/>
</dbReference>
<dbReference type="GO" id="GO:0031418">
    <property type="term" value="F:L-ascorbic acid binding"/>
    <property type="evidence" value="ECO:0007669"/>
    <property type="project" value="UniProtKB-KW"/>
</dbReference>
<dbReference type="GO" id="GO:0006974">
    <property type="term" value="P:DNA damage response"/>
    <property type="evidence" value="ECO:0000318"/>
    <property type="project" value="GO_Central"/>
</dbReference>
<dbReference type="GO" id="GO:0006879">
    <property type="term" value="P:intracellular iron ion homeostasis"/>
    <property type="evidence" value="ECO:0000318"/>
    <property type="project" value="GO_Central"/>
</dbReference>
<dbReference type="FunFam" id="2.60.120.620:FF:000006">
    <property type="entry name" value="PKHD-type hydroxylase YbiX"/>
    <property type="match status" value="1"/>
</dbReference>
<dbReference type="Gene3D" id="2.60.120.620">
    <property type="entry name" value="q2cbj1_9rhob like domain"/>
    <property type="match status" value="1"/>
</dbReference>
<dbReference type="Gene3D" id="4.10.860.20">
    <property type="entry name" value="Rabenosyn, Rab binding domain"/>
    <property type="match status" value="1"/>
</dbReference>
<dbReference type="HAMAP" id="MF_00657">
    <property type="entry name" value="Hydroxyl_YbiX"/>
    <property type="match status" value="1"/>
</dbReference>
<dbReference type="InterPro" id="IPR005123">
    <property type="entry name" value="Oxoglu/Fe-dep_dioxygenase_dom"/>
</dbReference>
<dbReference type="InterPro" id="IPR041097">
    <property type="entry name" value="PKHD_C"/>
</dbReference>
<dbReference type="InterPro" id="IPR023550">
    <property type="entry name" value="PKHD_hydroxylase"/>
</dbReference>
<dbReference type="InterPro" id="IPR006620">
    <property type="entry name" value="Pro_4_hyd_alph"/>
</dbReference>
<dbReference type="InterPro" id="IPR044862">
    <property type="entry name" value="Pro_4_hyd_alph_FE2OG_OXY"/>
</dbReference>
<dbReference type="NCBIfam" id="NF003974">
    <property type="entry name" value="PRK05467.1-3"/>
    <property type="match status" value="1"/>
</dbReference>
<dbReference type="NCBIfam" id="NF003975">
    <property type="entry name" value="PRK05467.1-4"/>
    <property type="match status" value="1"/>
</dbReference>
<dbReference type="PANTHER" id="PTHR41536">
    <property type="entry name" value="PKHD-TYPE HYDROXYLASE YBIX"/>
    <property type="match status" value="1"/>
</dbReference>
<dbReference type="PANTHER" id="PTHR41536:SF1">
    <property type="entry name" value="PKHD-TYPE HYDROXYLASE YBIX"/>
    <property type="match status" value="1"/>
</dbReference>
<dbReference type="Pfam" id="PF13640">
    <property type="entry name" value="2OG-FeII_Oxy_3"/>
    <property type="match status" value="1"/>
</dbReference>
<dbReference type="Pfam" id="PF18331">
    <property type="entry name" value="PKHD_C"/>
    <property type="match status" value="1"/>
</dbReference>
<dbReference type="SMART" id="SM00702">
    <property type="entry name" value="P4Hc"/>
    <property type="match status" value="1"/>
</dbReference>
<dbReference type="SUPFAM" id="SSF51197">
    <property type="entry name" value="Clavaminate synthase-like"/>
    <property type="match status" value="1"/>
</dbReference>
<dbReference type="PROSITE" id="PS51471">
    <property type="entry name" value="FE2OG_OXY"/>
    <property type="match status" value="1"/>
</dbReference>
<name>Y3913_SHEON</name>